<reference key="1">
    <citation type="journal article" date="1993" name="Biochem. J.">
        <title>Purification, sequence and antibacterial activity of two novel sapecin homologues from Sarcophaga embryonic cells: similarity of sapecin B to charybdotoxin.</title>
        <authorList>
            <person name="Yamada K."/>
            <person name="Natori S."/>
        </authorList>
    </citation>
    <scope>PROTEIN SEQUENCE</scope>
    <scope>DISULFIDE BONDS</scope>
</reference>
<name>SAPC_SARPE</name>
<proteinExistence type="evidence at protein level"/>
<keyword id="KW-0044">Antibiotic</keyword>
<keyword id="KW-0929">Antimicrobial</keyword>
<keyword id="KW-0211">Defensin</keyword>
<keyword id="KW-0903">Direct protein sequencing</keyword>
<keyword id="KW-1015">Disulfide bond</keyword>
<keyword id="KW-0391">Immunity</keyword>
<keyword id="KW-0399">Innate immunity</keyword>
<keyword id="KW-0964">Secreted</keyword>
<accession>P31530</accession>
<comment type="function">
    <text>Sapecins, which are potent bactericidal proteins, are produced in response to injury. Sapecin C is cytotoxic to Gram-positive bacteria.</text>
</comment>
<comment type="subcellular location">
    <subcellularLocation>
        <location>Secreted</location>
    </subcellularLocation>
</comment>
<comment type="tissue specificity">
    <text>Hemocytes and fat body.</text>
</comment>
<comment type="induction">
    <text>By injury to the larval cell wall.</text>
</comment>
<comment type="similarity">
    <text evidence="1">Belongs to the invertebrate defensin family. Type 1 subfamily.</text>
</comment>
<dbReference type="PIR" id="S32324">
    <property type="entry name" value="JU0225"/>
</dbReference>
<dbReference type="SMR" id="P31530"/>
<dbReference type="GO" id="GO:0005615">
    <property type="term" value="C:extracellular space"/>
    <property type="evidence" value="ECO:0007669"/>
    <property type="project" value="TreeGrafter"/>
</dbReference>
<dbReference type="GO" id="GO:0050830">
    <property type="term" value="P:defense response to Gram-positive bacterium"/>
    <property type="evidence" value="ECO:0007669"/>
    <property type="project" value="UniProtKB-ARBA"/>
</dbReference>
<dbReference type="GO" id="GO:0006959">
    <property type="term" value="P:humoral immune response"/>
    <property type="evidence" value="ECO:0007669"/>
    <property type="project" value="TreeGrafter"/>
</dbReference>
<dbReference type="GO" id="GO:0045087">
    <property type="term" value="P:innate immune response"/>
    <property type="evidence" value="ECO:0007669"/>
    <property type="project" value="UniProtKB-KW"/>
</dbReference>
<dbReference type="CDD" id="cd21806">
    <property type="entry name" value="DEFL_defensin-like"/>
    <property type="match status" value="1"/>
</dbReference>
<dbReference type="FunFam" id="3.30.30.10:FF:000005">
    <property type="entry name" value="Defensin"/>
    <property type="match status" value="1"/>
</dbReference>
<dbReference type="Gene3D" id="3.30.30.10">
    <property type="entry name" value="Knottin, scorpion toxin-like"/>
    <property type="match status" value="1"/>
</dbReference>
<dbReference type="InterPro" id="IPR001542">
    <property type="entry name" value="Defensin_invertebrate/fungal"/>
</dbReference>
<dbReference type="InterPro" id="IPR036574">
    <property type="entry name" value="Scorpion_toxin-like_sf"/>
</dbReference>
<dbReference type="PANTHER" id="PTHR13645">
    <property type="entry name" value="DEFENSIN"/>
    <property type="match status" value="1"/>
</dbReference>
<dbReference type="PANTHER" id="PTHR13645:SF0">
    <property type="entry name" value="DEFENSIN"/>
    <property type="match status" value="1"/>
</dbReference>
<dbReference type="Pfam" id="PF01097">
    <property type="entry name" value="Defensin_2"/>
    <property type="match status" value="1"/>
</dbReference>
<dbReference type="SUPFAM" id="SSF57095">
    <property type="entry name" value="Scorpion toxin-like"/>
    <property type="match status" value="1"/>
</dbReference>
<dbReference type="PROSITE" id="PS51378">
    <property type="entry name" value="INVERT_DEFENSINS"/>
    <property type="match status" value="1"/>
</dbReference>
<sequence length="40" mass="4142">ATCDLLSGIGVQHSACALHCVFRGNRGGYCTGKGICVCRN</sequence>
<feature type="peptide" id="PRO_0000044709" description="Sapecin-C">
    <location>
        <begin position="1"/>
        <end position="40"/>
    </location>
</feature>
<feature type="disulfide bond" evidence="1 2">
    <location>
        <begin position="3"/>
        <end position="30"/>
    </location>
</feature>
<feature type="disulfide bond" evidence="1 2">
    <location>
        <begin position="16"/>
        <end position="36"/>
    </location>
</feature>
<feature type="disulfide bond" evidence="1 2">
    <location>
        <begin position="20"/>
        <end position="38"/>
    </location>
</feature>
<protein>
    <recommendedName>
        <fullName>Sapecin-C</fullName>
    </recommendedName>
</protein>
<evidence type="ECO:0000255" key="1">
    <source>
        <dbReference type="PROSITE-ProRule" id="PRU00710"/>
    </source>
</evidence>
<evidence type="ECO:0000269" key="2">
    <source>
    </source>
</evidence>
<organism>
    <name type="scientific">Sarcophaga peregrina</name>
    <name type="common">Flesh fly</name>
    <name type="synonym">Boettcherisca peregrina</name>
    <dbReference type="NCBI Taxonomy" id="7386"/>
    <lineage>
        <taxon>Eukaryota</taxon>
        <taxon>Metazoa</taxon>
        <taxon>Ecdysozoa</taxon>
        <taxon>Arthropoda</taxon>
        <taxon>Hexapoda</taxon>
        <taxon>Insecta</taxon>
        <taxon>Pterygota</taxon>
        <taxon>Neoptera</taxon>
        <taxon>Endopterygota</taxon>
        <taxon>Diptera</taxon>
        <taxon>Brachycera</taxon>
        <taxon>Muscomorpha</taxon>
        <taxon>Oestroidea</taxon>
        <taxon>Sarcophagidae</taxon>
        <taxon>Sarcophaga</taxon>
        <taxon>Boettcherisca</taxon>
    </lineage>
</organism>